<sequence>MKPMYRSRSWRRKYVRTPGGRVVIHFERRKPKIAHCAICGRPLNGIPRGRPVEMRKLPKTKKRPERPYPHLCPKCMRRVMKEQVRAQIMKG</sequence>
<organism>
    <name type="scientific">Pyrococcus abyssi (strain GE5 / Orsay)</name>
    <dbReference type="NCBI Taxonomy" id="272844"/>
    <lineage>
        <taxon>Archaea</taxon>
        <taxon>Methanobacteriati</taxon>
        <taxon>Methanobacteriota</taxon>
        <taxon>Thermococci</taxon>
        <taxon>Thermococcales</taxon>
        <taxon>Thermococcaceae</taxon>
        <taxon>Pyrococcus</taxon>
    </lineage>
</organism>
<keyword id="KW-0687">Ribonucleoprotein</keyword>
<keyword id="KW-0689">Ribosomal protein</keyword>
<evidence type="ECO:0000256" key="1">
    <source>
        <dbReference type="SAM" id="MobiDB-lite"/>
    </source>
</evidence>
<evidence type="ECO:0000305" key="2"/>
<protein>
    <recommendedName>
        <fullName evidence="2">Large ribosomal subunit protein eL34</fullName>
    </recommendedName>
    <alternativeName>
        <fullName>50S ribosomal protein L34e</fullName>
    </alternativeName>
</protein>
<accession>Q9UZJ7</accession>
<accession>G8ZKC3</accession>
<feature type="chain" id="PRO_0000131851" description="Large ribosomal subunit protein eL34">
    <location>
        <begin position="1"/>
        <end position="91"/>
    </location>
</feature>
<feature type="region of interest" description="Disordered" evidence="1">
    <location>
        <begin position="48"/>
        <end position="71"/>
    </location>
</feature>
<name>RL34_PYRAB</name>
<comment type="similarity">
    <text evidence="2">Belongs to the eukaryotic ribosomal protein eL34 family.</text>
</comment>
<dbReference type="EMBL" id="AJ248286">
    <property type="protein sequence ID" value="CAB50060.1"/>
    <property type="molecule type" value="Genomic_DNA"/>
</dbReference>
<dbReference type="EMBL" id="HE613800">
    <property type="protein sequence ID" value="CCE70566.1"/>
    <property type="molecule type" value="Genomic_DNA"/>
</dbReference>
<dbReference type="PIR" id="G75094">
    <property type="entry name" value="G75094"/>
</dbReference>
<dbReference type="RefSeq" id="WP_048146877.1">
    <property type="nucleotide sequence ID" value="NC_000868.1"/>
</dbReference>
<dbReference type="SMR" id="Q9UZJ7"/>
<dbReference type="STRING" id="272844.PAB7289"/>
<dbReference type="KEGG" id="pab:PAB7289"/>
<dbReference type="PATRIC" id="fig|272844.11.peg.1207"/>
<dbReference type="eggNOG" id="arCOG04168">
    <property type="taxonomic scope" value="Archaea"/>
</dbReference>
<dbReference type="HOGENOM" id="CLU_118652_2_0_2"/>
<dbReference type="OrthoDB" id="43096at2157"/>
<dbReference type="PhylomeDB" id="Q9UZJ7"/>
<dbReference type="Proteomes" id="UP000000810">
    <property type="component" value="Chromosome"/>
</dbReference>
<dbReference type="Proteomes" id="UP000009139">
    <property type="component" value="Chromosome"/>
</dbReference>
<dbReference type="GO" id="GO:1990904">
    <property type="term" value="C:ribonucleoprotein complex"/>
    <property type="evidence" value="ECO:0007669"/>
    <property type="project" value="UniProtKB-KW"/>
</dbReference>
<dbReference type="GO" id="GO:0005840">
    <property type="term" value="C:ribosome"/>
    <property type="evidence" value="ECO:0007669"/>
    <property type="project" value="UniProtKB-KW"/>
</dbReference>
<dbReference type="GO" id="GO:0003735">
    <property type="term" value="F:structural constituent of ribosome"/>
    <property type="evidence" value="ECO:0007669"/>
    <property type="project" value="InterPro"/>
</dbReference>
<dbReference type="GO" id="GO:0006412">
    <property type="term" value="P:translation"/>
    <property type="evidence" value="ECO:0007669"/>
    <property type="project" value="UniProtKB-UniRule"/>
</dbReference>
<dbReference type="Gene3D" id="6.20.340.10">
    <property type="match status" value="1"/>
</dbReference>
<dbReference type="HAMAP" id="MF_00349">
    <property type="entry name" value="Ribosomal_eL34"/>
    <property type="match status" value="1"/>
</dbReference>
<dbReference type="InterPro" id="IPR008195">
    <property type="entry name" value="Ribosomal_eL34"/>
</dbReference>
<dbReference type="InterPro" id="IPR038562">
    <property type="entry name" value="Ribosomal_eL34_C_sf"/>
</dbReference>
<dbReference type="InterPro" id="IPR018065">
    <property type="entry name" value="Ribosomal_eL34_CS"/>
</dbReference>
<dbReference type="InterPro" id="IPR047868">
    <property type="entry name" value="Ribosomal_L34e_arc-type"/>
</dbReference>
<dbReference type="NCBIfam" id="NF003143">
    <property type="entry name" value="PRK04059.1"/>
    <property type="match status" value="1"/>
</dbReference>
<dbReference type="PANTHER" id="PTHR10759">
    <property type="entry name" value="60S RIBOSOMAL PROTEIN L34"/>
    <property type="match status" value="1"/>
</dbReference>
<dbReference type="Pfam" id="PF01199">
    <property type="entry name" value="Ribosomal_L34e"/>
    <property type="match status" value="1"/>
</dbReference>
<dbReference type="PRINTS" id="PR01250">
    <property type="entry name" value="RIBOSOMALL34"/>
</dbReference>
<dbReference type="PROSITE" id="PS01145">
    <property type="entry name" value="RIBOSOMAL_L34E"/>
    <property type="match status" value="1"/>
</dbReference>
<gene>
    <name type="primary">rpl34e</name>
    <name type="ordered locus">PYRAB11490</name>
    <name type="ORF">PAB7289</name>
</gene>
<proteinExistence type="inferred from homology"/>
<reference key="1">
    <citation type="journal article" date="2003" name="Mol. Microbiol.">
        <title>An integrated analysis of the genome of the hyperthermophilic archaeon Pyrococcus abyssi.</title>
        <authorList>
            <person name="Cohen G.N."/>
            <person name="Barbe V."/>
            <person name="Flament D."/>
            <person name="Galperin M."/>
            <person name="Heilig R."/>
            <person name="Lecompte O."/>
            <person name="Poch O."/>
            <person name="Prieur D."/>
            <person name="Querellou J."/>
            <person name="Ripp R."/>
            <person name="Thierry J.-C."/>
            <person name="Van der Oost J."/>
            <person name="Weissenbach J."/>
            <person name="Zivanovic Y."/>
            <person name="Forterre P."/>
        </authorList>
    </citation>
    <scope>NUCLEOTIDE SEQUENCE [LARGE SCALE GENOMIC DNA]</scope>
    <source>
        <strain>GE5 / Orsay</strain>
    </source>
</reference>
<reference key="2">
    <citation type="journal article" date="2012" name="Curr. Microbiol.">
        <title>Re-annotation of two hyperthermophilic archaea Pyrococcus abyssi GE5 and Pyrococcus furiosus DSM 3638.</title>
        <authorList>
            <person name="Gao J."/>
            <person name="Wang J."/>
        </authorList>
    </citation>
    <scope>GENOME REANNOTATION</scope>
    <source>
        <strain>GE5 / Orsay</strain>
    </source>
</reference>